<comment type="function">
    <text evidence="1">This protein binds to the 23S rRNA, and is important in its secondary structure. It is located near the subunit interface in the base of the L7/L12 stalk, and near the tRNA binding site of the peptidyltransferase center.</text>
</comment>
<comment type="subunit">
    <text evidence="1">Part of the 50S ribosomal subunit.</text>
</comment>
<comment type="similarity">
    <text evidence="1">Belongs to the universal ribosomal protein uL6 family.</text>
</comment>
<proteinExistence type="inferred from homology"/>
<protein>
    <recommendedName>
        <fullName evidence="1">Large ribosomal subunit protein uL6</fullName>
    </recommendedName>
    <alternativeName>
        <fullName evidence="2">50S ribosomal protein L6</fullName>
    </alternativeName>
</protein>
<name>RL6_PSEU2</name>
<accession>Q4ZMQ9</accession>
<reference key="1">
    <citation type="journal article" date="2005" name="Proc. Natl. Acad. Sci. U.S.A.">
        <title>Comparison of the complete genome sequences of Pseudomonas syringae pv. syringae B728a and pv. tomato DC3000.</title>
        <authorList>
            <person name="Feil H."/>
            <person name="Feil W.S."/>
            <person name="Chain P."/>
            <person name="Larimer F."/>
            <person name="Dibartolo G."/>
            <person name="Copeland A."/>
            <person name="Lykidis A."/>
            <person name="Trong S."/>
            <person name="Nolan M."/>
            <person name="Goltsman E."/>
            <person name="Thiel J."/>
            <person name="Malfatti S."/>
            <person name="Loper J.E."/>
            <person name="Lapidus A."/>
            <person name="Detter J.C."/>
            <person name="Land M."/>
            <person name="Richardson P.M."/>
            <person name="Kyrpides N.C."/>
            <person name="Ivanova N."/>
            <person name="Lindow S.E."/>
        </authorList>
    </citation>
    <scope>NUCLEOTIDE SEQUENCE [LARGE SCALE GENOMIC DNA]</scope>
    <source>
        <strain>B728a</strain>
    </source>
</reference>
<feature type="chain" id="PRO_0000265278" description="Large ribosomal subunit protein uL6">
    <location>
        <begin position="1"/>
        <end position="177"/>
    </location>
</feature>
<evidence type="ECO:0000255" key="1">
    <source>
        <dbReference type="HAMAP-Rule" id="MF_01365"/>
    </source>
</evidence>
<evidence type="ECO:0000305" key="2"/>
<dbReference type="EMBL" id="CP000075">
    <property type="protein sequence ID" value="AAY39563.1"/>
    <property type="molecule type" value="Genomic_DNA"/>
</dbReference>
<dbReference type="RefSeq" id="WP_011269093.1">
    <property type="nucleotide sequence ID" value="NC_007005.1"/>
</dbReference>
<dbReference type="RefSeq" id="YP_237601.1">
    <property type="nucleotide sequence ID" value="NC_007005.1"/>
</dbReference>
<dbReference type="SMR" id="Q4ZMQ9"/>
<dbReference type="STRING" id="205918.Psyr_4533"/>
<dbReference type="KEGG" id="psb:Psyr_4533"/>
<dbReference type="PATRIC" id="fig|205918.7.peg.4672"/>
<dbReference type="eggNOG" id="COG0097">
    <property type="taxonomic scope" value="Bacteria"/>
</dbReference>
<dbReference type="HOGENOM" id="CLU_065464_1_2_6"/>
<dbReference type="OrthoDB" id="9805007at2"/>
<dbReference type="Proteomes" id="UP000000426">
    <property type="component" value="Chromosome"/>
</dbReference>
<dbReference type="GO" id="GO:0022625">
    <property type="term" value="C:cytosolic large ribosomal subunit"/>
    <property type="evidence" value="ECO:0007669"/>
    <property type="project" value="TreeGrafter"/>
</dbReference>
<dbReference type="GO" id="GO:0019843">
    <property type="term" value="F:rRNA binding"/>
    <property type="evidence" value="ECO:0007669"/>
    <property type="project" value="UniProtKB-UniRule"/>
</dbReference>
<dbReference type="GO" id="GO:0003735">
    <property type="term" value="F:structural constituent of ribosome"/>
    <property type="evidence" value="ECO:0007669"/>
    <property type="project" value="InterPro"/>
</dbReference>
<dbReference type="GO" id="GO:0002181">
    <property type="term" value="P:cytoplasmic translation"/>
    <property type="evidence" value="ECO:0007669"/>
    <property type="project" value="TreeGrafter"/>
</dbReference>
<dbReference type="FunFam" id="3.90.930.12:FF:000001">
    <property type="entry name" value="50S ribosomal protein L6"/>
    <property type="match status" value="1"/>
</dbReference>
<dbReference type="FunFam" id="3.90.930.12:FF:000002">
    <property type="entry name" value="50S ribosomal protein L6"/>
    <property type="match status" value="1"/>
</dbReference>
<dbReference type="Gene3D" id="3.90.930.12">
    <property type="entry name" value="Ribosomal protein L6, alpha-beta domain"/>
    <property type="match status" value="2"/>
</dbReference>
<dbReference type="HAMAP" id="MF_01365_B">
    <property type="entry name" value="Ribosomal_uL6_B"/>
    <property type="match status" value="1"/>
</dbReference>
<dbReference type="InterPro" id="IPR000702">
    <property type="entry name" value="Ribosomal_uL6-like"/>
</dbReference>
<dbReference type="InterPro" id="IPR036789">
    <property type="entry name" value="Ribosomal_uL6-like_a/b-dom_sf"/>
</dbReference>
<dbReference type="InterPro" id="IPR020040">
    <property type="entry name" value="Ribosomal_uL6_a/b-dom"/>
</dbReference>
<dbReference type="InterPro" id="IPR019906">
    <property type="entry name" value="Ribosomal_uL6_bac-type"/>
</dbReference>
<dbReference type="InterPro" id="IPR002358">
    <property type="entry name" value="Ribosomal_uL6_CS"/>
</dbReference>
<dbReference type="NCBIfam" id="TIGR03654">
    <property type="entry name" value="L6_bact"/>
    <property type="match status" value="1"/>
</dbReference>
<dbReference type="PANTHER" id="PTHR11655">
    <property type="entry name" value="60S/50S RIBOSOMAL PROTEIN L6/L9"/>
    <property type="match status" value="1"/>
</dbReference>
<dbReference type="PANTHER" id="PTHR11655:SF14">
    <property type="entry name" value="LARGE RIBOSOMAL SUBUNIT PROTEIN UL6M"/>
    <property type="match status" value="1"/>
</dbReference>
<dbReference type="Pfam" id="PF00347">
    <property type="entry name" value="Ribosomal_L6"/>
    <property type="match status" value="2"/>
</dbReference>
<dbReference type="PIRSF" id="PIRSF002162">
    <property type="entry name" value="Ribosomal_L6"/>
    <property type="match status" value="1"/>
</dbReference>
<dbReference type="PRINTS" id="PR00059">
    <property type="entry name" value="RIBOSOMALL6"/>
</dbReference>
<dbReference type="SUPFAM" id="SSF56053">
    <property type="entry name" value="Ribosomal protein L6"/>
    <property type="match status" value="2"/>
</dbReference>
<dbReference type="PROSITE" id="PS00525">
    <property type="entry name" value="RIBOSOMAL_L6_1"/>
    <property type="match status" value="1"/>
</dbReference>
<gene>
    <name evidence="1" type="primary">rplF</name>
    <name type="ordered locus">Psyr_4533</name>
</gene>
<sequence length="177" mass="19248">MSRVAKNPVKLPSGVEVKLVGQLLSVKGAKGTLELNIHSSVEVVVEAGELRFVARNGDQQTRAMAGTTRALVNNMVQGVSQGFERKLQLVGVGYKAQAKGTVLNLALGFSHPVDYELPNGITAETPSQTDILIRGIDKQLVGQVAAEIRDFRRPEPYKGKGVRYADEVVRRKEAKKK</sequence>
<keyword id="KW-0687">Ribonucleoprotein</keyword>
<keyword id="KW-0689">Ribosomal protein</keyword>
<keyword id="KW-0694">RNA-binding</keyword>
<keyword id="KW-0699">rRNA-binding</keyword>
<organism>
    <name type="scientific">Pseudomonas syringae pv. syringae (strain B728a)</name>
    <dbReference type="NCBI Taxonomy" id="205918"/>
    <lineage>
        <taxon>Bacteria</taxon>
        <taxon>Pseudomonadati</taxon>
        <taxon>Pseudomonadota</taxon>
        <taxon>Gammaproteobacteria</taxon>
        <taxon>Pseudomonadales</taxon>
        <taxon>Pseudomonadaceae</taxon>
        <taxon>Pseudomonas</taxon>
        <taxon>Pseudomonas syringae</taxon>
    </lineage>
</organism>